<gene>
    <name type="ordered locus">MW0073</name>
</gene>
<protein>
    <recommendedName>
        <fullName>Uncharacterized lipoprotein MW0073</fullName>
    </recommendedName>
</protein>
<feature type="signal peptide" evidence="1">
    <location>
        <begin position="1"/>
        <end position="22"/>
    </location>
</feature>
<feature type="chain" id="PRO_0000282174" description="Uncharacterized lipoprotein MW0073">
    <location>
        <begin position="23"/>
        <end position="254"/>
    </location>
</feature>
<feature type="lipid moiety-binding region" description="N-palmitoyl cysteine" evidence="1">
    <location>
        <position position="23"/>
    </location>
</feature>
<feature type="lipid moiety-binding region" description="S-diacylglycerol cysteine" evidence="1">
    <location>
        <position position="23"/>
    </location>
</feature>
<evidence type="ECO:0000255" key="1">
    <source>
        <dbReference type="PROSITE-ProRule" id="PRU00303"/>
    </source>
</evidence>
<evidence type="ECO:0000305" key="2"/>
<sequence length="254" mass="29565">MKRLKKIVLCISFLFLTIFIGGCGMGKEAEIKKSFEKTLSMYPIKNLEDLYDKEGYRDDQFDKKDKGTWIINSEMATQNKGEALKIKGMVLYMNRNTKTTKGYYYVNAIKNDKDGRPQENEKRYPVKMIDNKVIPTKEIKDENIKTEIKNFKFFVQYGNFKDLKNYKDGDISYNPEAPIYSAKYQLTNDDYNVKQLRERYDIPTNKAPKLLLKGSGNLKGSSVGYKNIEFTFVEEKGKNIYFSDSLDYKKSGEV</sequence>
<dbReference type="EMBL" id="BA000033">
    <property type="protein sequence ID" value="BAB93938.1"/>
    <property type="status" value="ALT_INIT"/>
    <property type="molecule type" value="Genomic_DNA"/>
</dbReference>
<dbReference type="RefSeq" id="WP_001793247.1">
    <property type="nucleotide sequence ID" value="NC_003923.1"/>
</dbReference>
<dbReference type="SMR" id="Q8NYU0"/>
<dbReference type="KEGG" id="sam:MW0073"/>
<dbReference type="HOGENOM" id="CLU_071589_0_1_9"/>
<dbReference type="GO" id="GO:0005886">
    <property type="term" value="C:plasma membrane"/>
    <property type="evidence" value="ECO:0007669"/>
    <property type="project" value="UniProtKB-SubCell"/>
</dbReference>
<dbReference type="Gene3D" id="2.50.20.40">
    <property type="match status" value="1"/>
</dbReference>
<dbReference type="InterPro" id="IPR007595">
    <property type="entry name" value="Csa"/>
</dbReference>
<dbReference type="InterPro" id="IPR038641">
    <property type="entry name" value="Csa_sf"/>
</dbReference>
<dbReference type="NCBIfam" id="TIGR01742">
    <property type="entry name" value="SA_tandem_lipo"/>
    <property type="match status" value="1"/>
</dbReference>
<dbReference type="Pfam" id="PF04507">
    <property type="entry name" value="DUF576"/>
    <property type="match status" value="1"/>
</dbReference>
<dbReference type="PROSITE" id="PS51257">
    <property type="entry name" value="PROKAR_LIPOPROTEIN"/>
    <property type="match status" value="1"/>
</dbReference>
<keyword id="KW-1003">Cell membrane</keyword>
<keyword id="KW-0449">Lipoprotein</keyword>
<keyword id="KW-0472">Membrane</keyword>
<keyword id="KW-0564">Palmitate</keyword>
<keyword id="KW-0732">Signal</keyword>
<proteinExistence type="inferred from homology"/>
<accession>Q8NYU0</accession>
<name>Y073_STAAW</name>
<organism>
    <name type="scientific">Staphylococcus aureus (strain MW2)</name>
    <dbReference type="NCBI Taxonomy" id="196620"/>
    <lineage>
        <taxon>Bacteria</taxon>
        <taxon>Bacillati</taxon>
        <taxon>Bacillota</taxon>
        <taxon>Bacilli</taxon>
        <taxon>Bacillales</taxon>
        <taxon>Staphylococcaceae</taxon>
        <taxon>Staphylococcus</taxon>
    </lineage>
</organism>
<comment type="subcellular location">
    <subcellularLocation>
        <location evidence="1">Cell membrane</location>
        <topology evidence="1">Lipid-anchor</topology>
    </subcellularLocation>
</comment>
<comment type="similarity">
    <text evidence="2">Belongs to the staphylococcal tandem lipoprotein family.</text>
</comment>
<comment type="sequence caution" evidence="2">
    <conflict type="erroneous initiation">
        <sequence resource="EMBL-CDS" id="BAB93938"/>
    </conflict>
</comment>
<reference key="1">
    <citation type="journal article" date="2002" name="Lancet">
        <title>Genome and virulence determinants of high virulence community-acquired MRSA.</title>
        <authorList>
            <person name="Baba T."/>
            <person name="Takeuchi F."/>
            <person name="Kuroda M."/>
            <person name="Yuzawa H."/>
            <person name="Aoki K."/>
            <person name="Oguchi A."/>
            <person name="Nagai Y."/>
            <person name="Iwama N."/>
            <person name="Asano K."/>
            <person name="Naimi T."/>
            <person name="Kuroda H."/>
            <person name="Cui L."/>
            <person name="Yamamoto K."/>
            <person name="Hiramatsu K."/>
        </authorList>
    </citation>
    <scope>NUCLEOTIDE SEQUENCE [LARGE SCALE GENOMIC DNA]</scope>
    <source>
        <strain>MW2</strain>
    </source>
</reference>